<sequence length="65" mass="7420">MLFKSLNQLFNSSLSSMNSSSVVNSSSTLNVSFDLNSIQGTNKYYNSIFTRPQMYQCLKHIYINI</sequence>
<accession>Q553J1</accession>
<accession>Q86H85</accession>
<dbReference type="EMBL" id="AAFI02000013">
    <property type="protein sequence ID" value="EAL69663.1"/>
    <property type="molecule type" value="Genomic_DNA"/>
</dbReference>
<dbReference type="RefSeq" id="XP_643422.1">
    <property type="nucleotide sequence ID" value="XM_638330.1"/>
</dbReference>
<dbReference type="PaxDb" id="44689-DDB0235395"/>
<dbReference type="EnsemblProtists" id="EAL69663">
    <property type="protein sequence ID" value="EAL69663"/>
    <property type="gene ID" value="DDB_G0275825"/>
</dbReference>
<dbReference type="GeneID" id="8620008"/>
<dbReference type="KEGG" id="ddi:DDB_G0275825"/>
<dbReference type="dictyBase" id="DDB_G0275825"/>
<dbReference type="HOGENOM" id="CLU_206792_0_0_1"/>
<dbReference type="InParanoid" id="Q553J1"/>
<dbReference type="PRO" id="PR:Q553J1"/>
<dbReference type="Proteomes" id="UP000002195">
    <property type="component" value="Chromosome 2"/>
</dbReference>
<keyword id="KW-1185">Reference proteome</keyword>
<proteinExistence type="predicted"/>
<protein>
    <recommendedName>
        <fullName>Uncharacterized protein DDB_G0275825</fullName>
    </recommendedName>
</protein>
<reference key="1">
    <citation type="journal article" date="2002" name="Nature">
        <title>Sequence and analysis of chromosome 2 of Dictyostelium discoideum.</title>
        <authorList>
            <person name="Gloeckner G."/>
            <person name="Eichinger L."/>
            <person name="Szafranski K."/>
            <person name="Pachebat J.A."/>
            <person name="Bankier A.T."/>
            <person name="Dear P.H."/>
            <person name="Lehmann R."/>
            <person name="Baumgart C."/>
            <person name="Parra G."/>
            <person name="Abril J.F."/>
            <person name="Guigo R."/>
            <person name="Kumpf K."/>
            <person name="Tunggal B."/>
            <person name="Cox E.C."/>
            <person name="Quail M.A."/>
            <person name="Platzer M."/>
            <person name="Rosenthal A."/>
            <person name="Noegel A.A."/>
        </authorList>
    </citation>
    <scope>NUCLEOTIDE SEQUENCE [LARGE SCALE GENOMIC DNA]</scope>
    <source>
        <strain>AX4</strain>
    </source>
</reference>
<reference key="2">
    <citation type="journal article" date="2005" name="Nature">
        <title>The genome of the social amoeba Dictyostelium discoideum.</title>
        <authorList>
            <person name="Eichinger L."/>
            <person name="Pachebat J.A."/>
            <person name="Gloeckner G."/>
            <person name="Rajandream M.A."/>
            <person name="Sucgang R."/>
            <person name="Berriman M."/>
            <person name="Song J."/>
            <person name="Olsen R."/>
            <person name="Szafranski K."/>
            <person name="Xu Q."/>
            <person name="Tunggal B."/>
            <person name="Kummerfeld S."/>
            <person name="Madera M."/>
            <person name="Konfortov B.A."/>
            <person name="Rivero F."/>
            <person name="Bankier A.T."/>
            <person name="Lehmann R."/>
            <person name="Hamlin N."/>
            <person name="Davies R."/>
            <person name="Gaudet P."/>
            <person name="Fey P."/>
            <person name="Pilcher K."/>
            <person name="Chen G."/>
            <person name="Saunders D."/>
            <person name="Sodergren E.J."/>
            <person name="Davis P."/>
            <person name="Kerhornou A."/>
            <person name="Nie X."/>
            <person name="Hall N."/>
            <person name="Anjard C."/>
            <person name="Hemphill L."/>
            <person name="Bason N."/>
            <person name="Farbrother P."/>
            <person name="Desany B."/>
            <person name="Just E."/>
            <person name="Morio T."/>
            <person name="Rost R."/>
            <person name="Churcher C.M."/>
            <person name="Cooper J."/>
            <person name="Haydock S."/>
            <person name="van Driessche N."/>
            <person name="Cronin A."/>
            <person name="Goodhead I."/>
            <person name="Muzny D.M."/>
            <person name="Mourier T."/>
            <person name="Pain A."/>
            <person name="Lu M."/>
            <person name="Harper D."/>
            <person name="Lindsay R."/>
            <person name="Hauser H."/>
            <person name="James K.D."/>
            <person name="Quiles M."/>
            <person name="Madan Babu M."/>
            <person name="Saito T."/>
            <person name="Buchrieser C."/>
            <person name="Wardroper A."/>
            <person name="Felder M."/>
            <person name="Thangavelu M."/>
            <person name="Johnson D."/>
            <person name="Knights A."/>
            <person name="Loulseged H."/>
            <person name="Mungall K.L."/>
            <person name="Oliver K."/>
            <person name="Price C."/>
            <person name="Quail M.A."/>
            <person name="Urushihara H."/>
            <person name="Hernandez J."/>
            <person name="Rabbinowitsch E."/>
            <person name="Steffen D."/>
            <person name="Sanders M."/>
            <person name="Ma J."/>
            <person name="Kohara Y."/>
            <person name="Sharp S."/>
            <person name="Simmonds M.N."/>
            <person name="Spiegler S."/>
            <person name="Tivey A."/>
            <person name="Sugano S."/>
            <person name="White B."/>
            <person name="Walker D."/>
            <person name="Woodward J.R."/>
            <person name="Winckler T."/>
            <person name="Tanaka Y."/>
            <person name="Shaulsky G."/>
            <person name="Schleicher M."/>
            <person name="Weinstock G.M."/>
            <person name="Rosenthal A."/>
            <person name="Cox E.C."/>
            <person name="Chisholm R.L."/>
            <person name="Gibbs R.A."/>
            <person name="Loomis W.F."/>
            <person name="Platzer M."/>
            <person name="Kay R.R."/>
            <person name="Williams J.G."/>
            <person name="Dear P.H."/>
            <person name="Noegel A.A."/>
            <person name="Barrell B.G."/>
            <person name="Kuspa A."/>
        </authorList>
    </citation>
    <scope>NUCLEOTIDE SEQUENCE [LARGE SCALE GENOMIC DNA]</scope>
    <source>
        <strain>AX4</strain>
    </source>
</reference>
<organism>
    <name type="scientific">Dictyostelium discoideum</name>
    <name type="common">Social amoeba</name>
    <dbReference type="NCBI Taxonomy" id="44689"/>
    <lineage>
        <taxon>Eukaryota</taxon>
        <taxon>Amoebozoa</taxon>
        <taxon>Evosea</taxon>
        <taxon>Eumycetozoa</taxon>
        <taxon>Dictyostelia</taxon>
        <taxon>Dictyosteliales</taxon>
        <taxon>Dictyosteliaceae</taxon>
        <taxon>Dictyostelium</taxon>
    </lineage>
</organism>
<gene>
    <name type="ORF">DDB_G0275825</name>
</gene>
<feature type="chain" id="PRO_0000348102" description="Uncharacterized protein DDB_G0275825">
    <location>
        <begin position="1"/>
        <end position="65"/>
    </location>
</feature>
<name>Y5395_DICDI</name>